<protein>
    <recommendedName>
        <fullName evidence="1">Fluoride-specific ion channel FluC</fullName>
    </recommendedName>
</protein>
<keyword id="KW-0997">Cell inner membrane</keyword>
<keyword id="KW-1003">Cell membrane</keyword>
<keyword id="KW-0407">Ion channel</keyword>
<keyword id="KW-0406">Ion transport</keyword>
<keyword id="KW-0472">Membrane</keyword>
<keyword id="KW-0479">Metal-binding</keyword>
<keyword id="KW-0915">Sodium</keyword>
<keyword id="KW-0812">Transmembrane</keyword>
<keyword id="KW-1133">Transmembrane helix</keyword>
<keyword id="KW-0813">Transport</keyword>
<accession>Q87KE9</accession>
<sequence>MGQFSILGFIALGGAIGACSRYLVSEFCVLLFGRGFPYGTLTVNVVGSFIMGLLIAAFENEILATEPWRQVIGLGFLGALTTFSTFSMDNVLLMQQGAFFKMGLNILLNVVLSISAAWIGFQLLMRS</sequence>
<evidence type="ECO:0000255" key="1">
    <source>
        <dbReference type="HAMAP-Rule" id="MF_00454"/>
    </source>
</evidence>
<dbReference type="EMBL" id="BA000031">
    <property type="protein sequence ID" value="BAC61291.1"/>
    <property type="molecule type" value="Genomic_DNA"/>
</dbReference>
<dbReference type="RefSeq" id="NP_799407.1">
    <property type="nucleotide sequence ID" value="NC_004603.1"/>
</dbReference>
<dbReference type="RefSeq" id="WP_005465059.1">
    <property type="nucleotide sequence ID" value="NC_004603.1"/>
</dbReference>
<dbReference type="SMR" id="Q87KE9"/>
<dbReference type="GeneID" id="1190620"/>
<dbReference type="KEGG" id="vpa:VP3028"/>
<dbReference type="PATRIC" id="fig|223926.6.peg.2911"/>
<dbReference type="eggNOG" id="COG0239">
    <property type="taxonomic scope" value="Bacteria"/>
</dbReference>
<dbReference type="HOGENOM" id="CLU_114342_3_0_6"/>
<dbReference type="Proteomes" id="UP000002493">
    <property type="component" value="Chromosome 1"/>
</dbReference>
<dbReference type="GO" id="GO:0005886">
    <property type="term" value="C:plasma membrane"/>
    <property type="evidence" value="ECO:0007669"/>
    <property type="project" value="UniProtKB-SubCell"/>
</dbReference>
<dbReference type="GO" id="GO:0062054">
    <property type="term" value="F:fluoride channel activity"/>
    <property type="evidence" value="ECO:0007669"/>
    <property type="project" value="UniProtKB-UniRule"/>
</dbReference>
<dbReference type="GO" id="GO:0046872">
    <property type="term" value="F:metal ion binding"/>
    <property type="evidence" value="ECO:0007669"/>
    <property type="project" value="UniProtKB-KW"/>
</dbReference>
<dbReference type="GO" id="GO:0140114">
    <property type="term" value="P:cellular detoxification of fluoride"/>
    <property type="evidence" value="ECO:0007669"/>
    <property type="project" value="UniProtKB-UniRule"/>
</dbReference>
<dbReference type="HAMAP" id="MF_00454">
    <property type="entry name" value="FluC"/>
    <property type="match status" value="1"/>
</dbReference>
<dbReference type="InterPro" id="IPR003691">
    <property type="entry name" value="FluC"/>
</dbReference>
<dbReference type="NCBIfam" id="TIGR00494">
    <property type="entry name" value="crcB"/>
    <property type="match status" value="1"/>
</dbReference>
<dbReference type="NCBIfam" id="NF010796">
    <property type="entry name" value="PRK14200.1"/>
    <property type="match status" value="1"/>
</dbReference>
<dbReference type="PANTHER" id="PTHR28259">
    <property type="entry name" value="FLUORIDE EXPORT PROTEIN 1-RELATED"/>
    <property type="match status" value="1"/>
</dbReference>
<dbReference type="PANTHER" id="PTHR28259:SF1">
    <property type="entry name" value="FLUORIDE EXPORT PROTEIN 1-RELATED"/>
    <property type="match status" value="1"/>
</dbReference>
<dbReference type="Pfam" id="PF02537">
    <property type="entry name" value="CRCB"/>
    <property type="match status" value="1"/>
</dbReference>
<proteinExistence type="inferred from homology"/>
<organism>
    <name type="scientific">Vibrio parahaemolyticus serotype O3:K6 (strain RIMD 2210633)</name>
    <dbReference type="NCBI Taxonomy" id="223926"/>
    <lineage>
        <taxon>Bacteria</taxon>
        <taxon>Pseudomonadati</taxon>
        <taxon>Pseudomonadota</taxon>
        <taxon>Gammaproteobacteria</taxon>
        <taxon>Vibrionales</taxon>
        <taxon>Vibrionaceae</taxon>
        <taxon>Vibrio</taxon>
    </lineage>
</organism>
<name>FLUC_VIBPA</name>
<comment type="function">
    <text evidence="1">Fluoride-specific ion channel. Important for reducing fluoride concentration in the cell, thus reducing its toxicity.</text>
</comment>
<comment type="catalytic activity">
    <reaction evidence="1">
        <text>fluoride(in) = fluoride(out)</text>
        <dbReference type="Rhea" id="RHEA:76159"/>
        <dbReference type="ChEBI" id="CHEBI:17051"/>
    </reaction>
    <physiologicalReaction direction="left-to-right" evidence="1">
        <dbReference type="Rhea" id="RHEA:76160"/>
    </physiologicalReaction>
</comment>
<comment type="activity regulation">
    <text evidence="1">Na(+) is not transported, but it plays an essential structural role and its presence is essential for fluoride channel function.</text>
</comment>
<comment type="subcellular location">
    <subcellularLocation>
        <location evidence="1">Cell inner membrane</location>
        <topology evidence="1">Multi-pass membrane protein</topology>
    </subcellularLocation>
</comment>
<comment type="similarity">
    <text evidence="1">Belongs to the fluoride channel Fluc/FEX (TC 1.A.43) family.</text>
</comment>
<reference key="1">
    <citation type="journal article" date="2003" name="Lancet">
        <title>Genome sequence of Vibrio parahaemolyticus: a pathogenic mechanism distinct from that of V. cholerae.</title>
        <authorList>
            <person name="Makino K."/>
            <person name="Oshima K."/>
            <person name="Kurokawa K."/>
            <person name="Yokoyama K."/>
            <person name="Uda T."/>
            <person name="Tagomori K."/>
            <person name="Iijima Y."/>
            <person name="Najima M."/>
            <person name="Nakano M."/>
            <person name="Yamashita A."/>
            <person name="Kubota Y."/>
            <person name="Kimura S."/>
            <person name="Yasunaga T."/>
            <person name="Honda T."/>
            <person name="Shinagawa H."/>
            <person name="Hattori M."/>
            <person name="Iida T."/>
        </authorList>
    </citation>
    <scope>NUCLEOTIDE SEQUENCE [LARGE SCALE GENOMIC DNA]</scope>
    <source>
        <strain>RIMD 2210633</strain>
    </source>
</reference>
<feature type="chain" id="PRO_0000110207" description="Fluoride-specific ion channel FluC">
    <location>
        <begin position="1"/>
        <end position="127"/>
    </location>
</feature>
<feature type="transmembrane region" description="Helical" evidence="1">
    <location>
        <begin position="4"/>
        <end position="24"/>
    </location>
</feature>
<feature type="transmembrane region" description="Helical" evidence="1">
    <location>
        <begin position="38"/>
        <end position="58"/>
    </location>
</feature>
<feature type="transmembrane region" description="Helical" evidence="1">
    <location>
        <begin position="71"/>
        <end position="91"/>
    </location>
</feature>
<feature type="transmembrane region" description="Helical" evidence="1">
    <location>
        <begin position="104"/>
        <end position="124"/>
    </location>
</feature>
<feature type="binding site" evidence="1">
    <location>
        <position position="78"/>
    </location>
    <ligand>
        <name>Na(+)</name>
        <dbReference type="ChEBI" id="CHEBI:29101"/>
        <note>structural</note>
    </ligand>
</feature>
<feature type="binding site" evidence="1">
    <location>
        <position position="81"/>
    </location>
    <ligand>
        <name>Na(+)</name>
        <dbReference type="ChEBI" id="CHEBI:29101"/>
        <note>structural</note>
    </ligand>
</feature>
<gene>
    <name evidence="1" type="primary">fluC</name>
    <name evidence="1" type="synonym">crcB</name>
    <name type="ordered locus">VP3028</name>
</gene>